<dbReference type="EC" id="6.1.1.11" evidence="1"/>
<dbReference type="EMBL" id="AE015450">
    <property type="protein sequence ID" value="AAP57072.2"/>
    <property type="molecule type" value="Genomic_DNA"/>
</dbReference>
<dbReference type="RefSeq" id="WP_011113985.1">
    <property type="nucleotide sequence ID" value="NC_004829.2"/>
</dbReference>
<dbReference type="SMR" id="Q7NAD6"/>
<dbReference type="KEGG" id="mga:MGA_0608"/>
<dbReference type="PATRIC" id="fig|233150.7.peg.812"/>
<dbReference type="HOGENOM" id="CLU_023797_1_1_14"/>
<dbReference type="OrthoDB" id="9804647at2"/>
<dbReference type="UniPathway" id="UPA00906">
    <property type="reaction ID" value="UER00895"/>
</dbReference>
<dbReference type="Proteomes" id="UP000001418">
    <property type="component" value="Chromosome"/>
</dbReference>
<dbReference type="GO" id="GO:0005737">
    <property type="term" value="C:cytoplasm"/>
    <property type="evidence" value="ECO:0007669"/>
    <property type="project" value="UniProtKB-SubCell"/>
</dbReference>
<dbReference type="GO" id="GO:0005524">
    <property type="term" value="F:ATP binding"/>
    <property type="evidence" value="ECO:0007669"/>
    <property type="project" value="UniProtKB-UniRule"/>
</dbReference>
<dbReference type="GO" id="GO:0004828">
    <property type="term" value="F:serine-tRNA ligase activity"/>
    <property type="evidence" value="ECO:0007669"/>
    <property type="project" value="UniProtKB-UniRule"/>
</dbReference>
<dbReference type="GO" id="GO:0016260">
    <property type="term" value="P:selenocysteine biosynthetic process"/>
    <property type="evidence" value="ECO:0007669"/>
    <property type="project" value="UniProtKB-UniRule"/>
</dbReference>
<dbReference type="GO" id="GO:0006434">
    <property type="term" value="P:seryl-tRNA aminoacylation"/>
    <property type="evidence" value="ECO:0007669"/>
    <property type="project" value="UniProtKB-UniRule"/>
</dbReference>
<dbReference type="CDD" id="cd00770">
    <property type="entry name" value="SerRS_core"/>
    <property type="match status" value="1"/>
</dbReference>
<dbReference type="Gene3D" id="3.30.930.10">
    <property type="entry name" value="Bira Bifunctional Protein, Domain 2"/>
    <property type="match status" value="1"/>
</dbReference>
<dbReference type="Gene3D" id="1.10.287.40">
    <property type="entry name" value="Serine-tRNA synthetase, tRNA binding domain"/>
    <property type="match status" value="1"/>
</dbReference>
<dbReference type="HAMAP" id="MF_00176">
    <property type="entry name" value="Ser_tRNA_synth_type1"/>
    <property type="match status" value="1"/>
</dbReference>
<dbReference type="InterPro" id="IPR002314">
    <property type="entry name" value="aa-tRNA-synt_IIb"/>
</dbReference>
<dbReference type="InterPro" id="IPR006195">
    <property type="entry name" value="aa-tRNA-synth_II"/>
</dbReference>
<dbReference type="InterPro" id="IPR045864">
    <property type="entry name" value="aa-tRNA-synth_II/BPL/LPL"/>
</dbReference>
<dbReference type="InterPro" id="IPR002317">
    <property type="entry name" value="Ser-tRNA-ligase_type_1"/>
</dbReference>
<dbReference type="InterPro" id="IPR015866">
    <property type="entry name" value="Ser-tRNA-synth_1_N"/>
</dbReference>
<dbReference type="InterPro" id="IPR042103">
    <property type="entry name" value="SerRS_1_N_sf"/>
</dbReference>
<dbReference type="InterPro" id="IPR033729">
    <property type="entry name" value="SerRS_core"/>
</dbReference>
<dbReference type="InterPro" id="IPR010978">
    <property type="entry name" value="tRNA-bd_arm"/>
</dbReference>
<dbReference type="NCBIfam" id="TIGR00414">
    <property type="entry name" value="serS"/>
    <property type="match status" value="1"/>
</dbReference>
<dbReference type="PANTHER" id="PTHR43697:SF1">
    <property type="entry name" value="SERINE--TRNA LIGASE"/>
    <property type="match status" value="1"/>
</dbReference>
<dbReference type="PANTHER" id="PTHR43697">
    <property type="entry name" value="SERYL-TRNA SYNTHETASE"/>
    <property type="match status" value="1"/>
</dbReference>
<dbReference type="Pfam" id="PF02403">
    <property type="entry name" value="Seryl_tRNA_N"/>
    <property type="match status" value="1"/>
</dbReference>
<dbReference type="Pfam" id="PF00587">
    <property type="entry name" value="tRNA-synt_2b"/>
    <property type="match status" value="1"/>
</dbReference>
<dbReference type="PIRSF" id="PIRSF001529">
    <property type="entry name" value="Ser-tRNA-synth_IIa"/>
    <property type="match status" value="1"/>
</dbReference>
<dbReference type="PRINTS" id="PR00981">
    <property type="entry name" value="TRNASYNTHSER"/>
</dbReference>
<dbReference type="SUPFAM" id="SSF55681">
    <property type="entry name" value="Class II aaRS and biotin synthetases"/>
    <property type="match status" value="1"/>
</dbReference>
<dbReference type="SUPFAM" id="SSF46589">
    <property type="entry name" value="tRNA-binding arm"/>
    <property type="match status" value="1"/>
</dbReference>
<dbReference type="PROSITE" id="PS50862">
    <property type="entry name" value="AA_TRNA_LIGASE_II"/>
    <property type="match status" value="1"/>
</dbReference>
<reference key="1">
    <citation type="journal article" date="2003" name="Microbiology">
        <title>The complete genome sequence of the avian pathogen Mycoplasma gallisepticum strain R(low).</title>
        <authorList>
            <person name="Papazisi L."/>
            <person name="Gorton T.S."/>
            <person name="Kutish G."/>
            <person name="Markham P.F."/>
            <person name="Browning G.F."/>
            <person name="Nguyen D.K."/>
            <person name="Swartzell S."/>
            <person name="Madan A."/>
            <person name="Mahairas G."/>
            <person name="Geary S.J."/>
        </authorList>
    </citation>
    <scope>NUCLEOTIDE SEQUENCE [LARGE SCALE GENOMIC DNA]</scope>
    <source>
        <strain>R(low / passage 15 / clone 2)</strain>
    </source>
</reference>
<proteinExistence type="inferred from homology"/>
<comment type="function">
    <text evidence="1">Catalyzes the attachment of serine to tRNA(Ser). Is also able to aminoacylate tRNA(Sec) with serine, to form the misacylated tRNA L-seryl-tRNA(Sec), which will be further converted into selenocysteinyl-tRNA(Sec).</text>
</comment>
<comment type="catalytic activity">
    <reaction evidence="1">
        <text>tRNA(Ser) + L-serine + ATP = L-seryl-tRNA(Ser) + AMP + diphosphate + H(+)</text>
        <dbReference type="Rhea" id="RHEA:12292"/>
        <dbReference type="Rhea" id="RHEA-COMP:9669"/>
        <dbReference type="Rhea" id="RHEA-COMP:9703"/>
        <dbReference type="ChEBI" id="CHEBI:15378"/>
        <dbReference type="ChEBI" id="CHEBI:30616"/>
        <dbReference type="ChEBI" id="CHEBI:33019"/>
        <dbReference type="ChEBI" id="CHEBI:33384"/>
        <dbReference type="ChEBI" id="CHEBI:78442"/>
        <dbReference type="ChEBI" id="CHEBI:78533"/>
        <dbReference type="ChEBI" id="CHEBI:456215"/>
        <dbReference type="EC" id="6.1.1.11"/>
    </reaction>
</comment>
<comment type="catalytic activity">
    <reaction evidence="1">
        <text>tRNA(Sec) + L-serine + ATP = L-seryl-tRNA(Sec) + AMP + diphosphate + H(+)</text>
        <dbReference type="Rhea" id="RHEA:42580"/>
        <dbReference type="Rhea" id="RHEA-COMP:9742"/>
        <dbReference type="Rhea" id="RHEA-COMP:10128"/>
        <dbReference type="ChEBI" id="CHEBI:15378"/>
        <dbReference type="ChEBI" id="CHEBI:30616"/>
        <dbReference type="ChEBI" id="CHEBI:33019"/>
        <dbReference type="ChEBI" id="CHEBI:33384"/>
        <dbReference type="ChEBI" id="CHEBI:78442"/>
        <dbReference type="ChEBI" id="CHEBI:78533"/>
        <dbReference type="ChEBI" id="CHEBI:456215"/>
        <dbReference type="EC" id="6.1.1.11"/>
    </reaction>
</comment>
<comment type="pathway">
    <text evidence="1">Aminoacyl-tRNA biosynthesis; selenocysteinyl-tRNA(Sec) biosynthesis; L-seryl-tRNA(Sec) from L-serine and tRNA(Sec): step 1/1.</text>
</comment>
<comment type="subunit">
    <text evidence="1">Homodimer. The tRNA molecule binds across the dimer.</text>
</comment>
<comment type="subcellular location">
    <subcellularLocation>
        <location evidence="1">Cytoplasm</location>
    </subcellularLocation>
</comment>
<comment type="domain">
    <text evidence="1">Consists of two distinct domains, a catalytic core and a N-terminal extension that is involved in tRNA binding.</text>
</comment>
<comment type="similarity">
    <text evidence="1">Belongs to the class-II aminoacyl-tRNA synthetase family. Type-1 seryl-tRNA synthetase subfamily.</text>
</comment>
<organism>
    <name type="scientific">Mycoplasmoides gallisepticum (strain R(low / passage 15 / clone 2))</name>
    <name type="common">Mycoplasma gallisepticum</name>
    <dbReference type="NCBI Taxonomy" id="710127"/>
    <lineage>
        <taxon>Bacteria</taxon>
        <taxon>Bacillati</taxon>
        <taxon>Mycoplasmatota</taxon>
        <taxon>Mycoplasmoidales</taxon>
        <taxon>Mycoplasmoidaceae</taxon>
        <taxon>Mycoplasmoides</taxon>
    </lineage>
</organism>
<protein>
    <recommendedName>
        <fullName evidence="1">Serine--tRNA ligase</fullName>
        <ecNumber evidence="1">6.1.1.11</ecNumber>
    </recommendedName>
    <alternativeName>
        <fullName evidence="1">Seryl-tRNA synthetase</fullName>
        <shortName evidence="1">SerRS</shortName>
    </alternativeName>
    <alternativeName>
        <fullName evidence="1">Seryl-tRNA(Ser/Sec) synthetase</fullName>
    </alternativeName>
</protein>
<keyword id="KW-0030">Aminoacyl-tRNA synthetase</keyword>
<keyword id="KW-0067">ATP-binding</keyword>
<keyword id="KW-0963">Cytoplasm</keyword>
<keyword id="KW-0436">Ligase</keyword>
<keyword id="KW-0547">Nucleotide-binding</keyword>
<keyword id="KW-0648">Protein biosynthesis</keyword>
<keyword id="KW-1185">Reference proteome</keyword>
<feature type="chain" id="PRO_0000122078" description="Serine--tRNA ligase">
    <location>
        <begin position="1"/>
        <end position="420"/>
    </location>
</feature>
<feature type="binding site" evidence="1">
    <location>
        <begin position="228"/>
        <end position="230"/>
    </location>
    <ligand>
        <name>L-serine</name>
        <dbReference type="ChEBI" id="CHEBI:33384"/>
    </ligand>
</feature>
<feature type="binding site" evidence="1">
    <location>
        <begin position="259"/>
        <end position="261"/>
    </location>
    <ligand>
        <name>ATP</name>
        <dbReference type="ChEBI" id="CHEBI:30616"/>
    </ligand>
</feature>
<feature type="binding site" evidence="1">
    <location>
        <position position="282"/>
    </location>
    <ligand>
        <name>L-serine</name>
        <dbReference type="ChEBI" id="CHEBI:33384"/>
    </ligand>
</feature>
<feature type="binding site" evidence="1">
    <location>
        <begin position="346"/>
        <end position="349"/>
    </location>
    <ligand>
        <name>ATP</name>
        <dbReference type="ChEBI" id="CHEBI:30616"/>
    </ligand>
</feature>
<feature type="binding site" evidence="1">
    <location>
        <position position="382"/>
    </location>
    <ligand>
        <name>L-serine</name>
        <dbReference type="ChEBI" id="CHEBI:33384"/>
    </ligand>
</feature>
<name>SYS_MYCGA</name>
<gene>
    <name evidence="1" type="primary">serS</name>
    <name type="ordered locus">MYCGA7220</name>
    <name type="ORF">MGA_0608</name>
</gene>
<sequence length="420" mass="48647">MLDKNLLKTNSKEIREQLKSRSFNLDWYDEFLRLEKQLSTLLRTIEKLNEQKNINAKKAATTESDAQRKKLIQEGGLLRAELEKNEAKYNEIKEDFDYIYQRIPNLPTEDVPIGKDEKENVEMFKSRKPTFFDFKPLPHYELATKLEMIGLDVASKITGSRFSIYKKDGARLMRAIQQFCLYVNADKYEEYLPPVIVNKDSYYGSGQFPKFVEDVFKLEGTNYYLASTAEVQLVNLHRNEILKEADLPKYYTASTACFRSEAGSAGKDTKGLIRQHQFYKTELVKIVHPSTSKQEHEAMAKDAEKILELLELPYRRMVLCTGDMGFSATKTYDLEVWIPSENKYREISSISNCGDFQARRANIKFKDAISKKNLYVHTLNASALAHDRLFVAIVENYQQKDGSIKIPKALVKYFGKEYIK</sequence>
<accession>Q7NAD6</accession>
<evidence type="ECO:0000255" key="1">
    <source>
        <dbReference type="HAMAP-Rule" id="MF_00176"/>
    </source>
</evidence>